<sequence length="151" mass="16424">MATLESRLVDMLTVPVEALGFQLWGIEYVQAGKHSILRVFIDGENGINIEDCANVSRQVSAVLDVEDPISTEYTLEVSSPGVDRPLFTAEQYAAYVGEDVKLQLTMPVAGSRNLKGAITQVDGQMLSLNVNGKELVVALDNIRKGNIIAKF</sequence>
<protein>
    <recommendedName>
        <fullName evidence="1">Ribosome maturation factor RimP</fullName>
    </recommendedName>
</protein>
<organism>
    <name type="scientific">Shewanella sp. (strain MR-7)</name>
    <dbReference type="NCBI Taxonomy" id="60481"/>
    <lineage>
        <taxon>Bacteria</taxon>
        <taxon>Pseudomonadati</taxon>
        <taxon>Pseudomonadota</taxon>
        <taxon>Gammaproteobacteria</taxon>
        <taxon>Alteromonadales</taxon>
        <taxon>Shewanellaceae</taxon>
        <taxon>Shewanella</taxon>
    </lineage>
</organism>
<name>RIMP_SHESR</name>
<reference key="1">
    <citation type="submission" date="2006-08" db="EMBL/GenBank/DDBJ databases">
        <title>Complete sequence of chromosome 1 of Shewanella sp. MR-7.</title>
        <authorList>
            <person name="Copeland A."/>
            <person name="Lucas S."/>
            <person name="Lapidus A."/>
            <person name="Barry K."/>
            <person name="Detter J.C."/>
            <person name="Glavina del Rio T."/>
            <person name="Hammon N."/>
            <person name="Israni S."/>
            <person name="Dalin E."/>
            <person name="Tice H."/>
            <person name="Pitluck S."/>
            <person name="Kiss H."/>
            <person name="Brettin T."/>
            <person name="Bruce D."/>
            <person name="Han C."/>
            <person name="Tapia R."/>
            <person name="Gilna P."/>
            <person name="Schmutz J."/>
            <person name="Larimer F."/>
            <person name="Land M."/>
            <person name="Hauser L."/>
            <person name="Kyrpides N."/>
            <person name="Mikhailova N."/>
            <person name="Nealson K."/>
            <person name="Konstantinidis K."/>
            <person name="Klappenbach J."/>
            <person name="Tiedje J."/>
            <person name="Richardson P."/>
        </authorList>
    </citation>
    <scope>NUCLEOTIDE SEQUENCE [LARGE SCALE GENOMIC DNA]</scope>
    <source>
        <strain>MR-7</strain>
    </source>
</reference>
<proteinExistence type="inferred from homology"/>
<comment type="function">
    <text evidence="1">Required for maturation of 30S ribosomal subunits.</text>
</comment>
<comment type="subcellular location">
    <subcellularLocation>
        <location evidence="1">Cytoplasm</location>
    </subcellularLocation>
</comment>
<comment type="similarity">
    <text evidence="1">Belongs to the RimP family.</text>
</comment>
<feature type="chain" id="PRO_1000064773" description="Ribosome maturation factor RimP">
    <location>
        <begin position="1"/>
        <end position="151"/>
    </location>
</feature>
<keyword id="KW-0963">Cytoplasm</keyword>
<keyword id="KW-0690">Ribosome biogenesis</keyword>
<gene>
    <name evidence="1" type="primary">rimP</name>
    <name type="ordered locus">Shewmr7_1089</name>
</gene>
<dbReference type="EMBL" id="CP000444">
    <property type="protein sequence ID" value="ABI42088.1"/>
    <property type="molecule type" value="Genomic_DNA"/>
</dbReference>
<dbReference type="SMR" id="Q0HXR7"/>
<dbReference type="KEGG" id="shm:Shewmr7_1089"/>
<dbReference type="HOGENOM" id="CLU_070525_1_1_6"/>
<dbReference type="GO" id="GO:0005829">
    <property type="term" value="C:cytosol"/>
    <property type="evidence" value="ECO:0007669"/>
    <property type="project" value="TreeGrafter"/>
</dbReference>
<dbReference type="GO" id="GO:0000028">
    <property type="term" value="P:ribosomal small subunit assembly"/>
    <property type="evidence" value="ECO:0007669"/>
    <property type="project" value="TreeGrafter"/>
</dbReference>
<dbReference type="GO" id="GO:0006412">
    <property type="term" value="P:translation"/>
    <property type="evidence" value="ECO:0007669"/>
    <property type="project" value="TreeGrafter"/>
</dbReference>
<dbReference type="CDD" id="cd01734">
    <property type="entry name" value="YlxS_C"/>
    <property type="match status" value="1"/>
</dbReference>
<dbReference type="FunFam" id="2.30.30.180:FF:000001">
    <property type="entry name" value="Ribosome maturation factor RimP"/>
    <property type="match status" value="1"/>
</dbReference>
<dbReference type="FunFam" id="3.30.300.70:FF:000001">
    <property type="entry name" value="Ribosome maturation factor RimP"/>
    <property type="match status" value="1"/>
</dbReference>
<dbReference type="Gene3D" id="2.30.30.180">
    <property type="entry name" value="Ribosome maturation factor RimP, C-terminal domain"/>
    <property type="match status" value="1"/>
</dbReference>
<dbReference type="Gene3D" id="3.30.300.70">
    <property type="entry name" value="RimP-like superfamily, N-terminal"/>
    <property type="match status" value="1"/>
</dbReference>
<dbReference type="HAMAP" id="MF_01077">
    <property type="entry name" value="RimP"/>
    <property type="match status" value="1"/>
</dbReference>
<dbReference type="InterPro" id="IPR003728">
    <property type="entry name" value="Ribosome_maturation_RimP"/>
</dbReference>
<dbReference type="InterPro" id="IPR028998">
    <property type="entry name" value="RimP_C"/>
</dbReference>
<dbReference type="InterPro" id="IPR036847">
    <property type="entry name" value="RimP_C_sf"/>
</dbReference>
<dbReference type="InterPro" id="IPR028989">
    <property type="entry name" value="RimP_N"/>
</dbReference>
<dbReference type="InterPro" id="IPR035956">
    <property type="entry name" value="RimP_N_sf"/>
</dbReference>
<dbReference type="NCBIfam" id="NF000927">
    <property type="entry name" value="PRK00092.1-1"/>
    <property type="match status" value="1"/>
</dbReference>
<dbReference type="PANTHER" id="PTHR33867">
    <property type="entry name" value="RIBOSOME MATURATION FACTOR RIMP"/>
    <property type="match status" value="1"/>
</dbReference>
<dbReference type="PANTHER" id="PTHR33867:SF1">
    <property type="entry name" value="RIBOSOME MATURATION FACTOR RIMP"/>
    <property type="match status" value="1"/>
</dbReference>
<dbReference type="Pfam" id="PF17384">
    <property type="entry name" value="DUF150_C"/>
    <property type="match status" value="1"/>
</dbReference>
<dbReference type="Pfam" id="PF02576">
    <property type="entry name" value="RimP_N"/>
    <property type="match status" value="1"/>
</dbReference>
<dbReference type="SUPFAM" id="SSF74942">
    <property type="entry name" value="YhbC-like, C-terminal domain"/>
    <property type="match status" value="1"/>
</dbReference>
<dbReference type="SUPFAM" id="SSF75420">
    <property type="entry name" value="YhbC-like, N-terminal domain"/>
    <property type="match status" value="1"/>
</dbReference>
<accession>Q0HXR7</accession>
<evidence type="ECO:0000255" key="1">
    <source>
        <dbReference type="HAMAP-Rule" id="MF_01077"/>
    </source>
</evidence>